<comment type="function">
    <text evidence="2">Plays a role in the regulation of phosphate uptake. In this role, it may bind, possibly as a chaperone, to PhoR, PhoB or a PhoR-PhoB complex to promote dephosphorylation of phospho-PhoB, or inhibit formation of the PhoR-PhoB transitory complex (Probable).</text>
</comment>
<comment type="subunit">
    <text evidence="1">Homodimer.</text>
</comment>
<comment type="subcellular location">
    <subcellularLocation>
        <location evidence="1">Cytoplasm</location>
    </subcellularLocation>
</comment>
<comment type="similarity">
    <text evidence="2">Belongs to the PhoU family.</text>
</comment>
<evidence type="ECO:0000269" key="1">
    <source>
    </source>
</evidence>
<evidence type="ECO:0000305" key="2"/>
<evidence type="ECO:0007829" key="3">
    <source>
        <dbReference type="PDB" id="1T72"/>
    </source>
</evidence>
<protein>
    <recommendedName>
        <fullName>Phosphate-specific transport system accessory protein PhoU homolog</fullName>
        <shortName>Pst system accessory protein PhoU homolog</shortName>
    </recommendedName>
    <alternativeName>
        <fullName>PhoU-like phosphate uptake regulator</fullName>
    </alternativeName>
</protein>
<dbReference type="EMBL" id="AE000657">
    <property type="protein sequence ID" value="AAC07012.1"/>
    <property type="molecule type" value="Genomic_DNA"/>
</dbReference>
<dbReference type="PIR" id="B70378">
    <property type="entry name" value="B70378"/>
</dbReference>
<dbReference type="RefSeq" id="NP_213615.1">
    <property type="nucleotide sequence ID" value="NC_000918.1"/>
</dbReference>
<dbReference type="RefSeq" id="WP_010880553.1">
    <property type="nucleotide sequence ID" value="NC_000918.1"/>
</dbReference>
<dbReference type="PDB" id="1T72">
    <property type="method" value="X-ray"/>
    <property type="resolution" value="2.90 A"/>
    <property type="chains" value="A/B/D/E/F/G=1-221"/>
</dbReference>
<dbReference type="PDB" id="1T8B">
    <property type="method" value="X-ray"/>
    <property type="resolution" value="3.23 A"/>
    <property type="chains" value="A/B=1-221"/>
</dbReference>
<dbReference type="PDBsum" id="1T72"/>
<dbReference type="PDBsum" id="1T8B"/>
<dbReference type="SMR" id="O67053"/>
<dbReference type="FunCoup" id="O67053">
    <property type="interactions" value="362"/>
</dbReference>
<dbReference type="STRING" id="224324.aq_906"/>
<dbReference type="EnsemblBacteria" id="AAC07012">
    <property type="protein sequence ID" value="AAC07012"/>
    <property type="gene ID" value="aq_906"/>
</dbReference>
<dbReference type="KEGG" id="aae:aq_906"/>
<dbReference type="PATRIC" id="fig|224324.8.peg.707"/>
<dbReference type="eggNOG" id="COG0704">
    <property type="taxonomic scope" value="Bacteria"/>
</dbReference>
<dbReference type="HOGENOM" id="CLU_078518_3_0_0"/>
<dbReference type="InParanoid" id="O67053"/>
<dbReference type="OrthoDB" id="9814256at2"/>
<dbReference type="EvolutionaryTrace" id="O67053"/>
<dbReference type="Proteomes" id="UP000000798">
    <property type="component" value="Chromosome"/>
</dbReference>
<dbReference type="GO" id="GO:0005737">
    <property type="term" value="C:cytoplasm"/>
    <property type="evidence" value="ECO:0000314"/>
    <property type="project" value="UniProtKB"/>
</dbReference>
<dbReference type="GO" id="GO:0042803">
    <property type="term" value="F:protein homodimerization activity"/>
    <property type="evidence" value="ECO:0000314"/>
    <property type="project" value="UniProtKB"/>
</dbReference>
<dbReference type="GO" id="GO:0030643">
    <property type="term" value="P:intracellular phosphate ion homeostasis"/>
    <property type="evidence" value="ECO:0007669"/>
    <property type="project" value="InterPro"/>
</dbReference>
<dbReference type="GO" id="GO:0010629">
    <property type="term" value="P:negative regulation of gene expression"/>
    <property type="evidence" value="ECO:0000303"/>
    <property type="project" value="UniProtKB"/>
</dbReference>
<dbReference type="GO" id="GO:0045936">
    <property type="term" value="P:negative regulation of phosphate metabolic process"/>
    <property type="evidence" value="ECO:0000250"/>
    <property type="project" value="UniProtKB"/>
</dbReference>
<dbReference type="GO" id="GO:2000186">
    <property type="term" value="P:negative regulation of phosphate transmembrane transport"/>
    <property type="evidence" value="ECO:0000303"/>
    <property type="project" value="UniProtKB"/>
</dbReference>
<dbReference type="GO" id="GO:0006817">
    <property type="term" value="P:phosphate ion transport"/>
    <property type="evidence" value="ECO:0007669"/>
    <property type="project" value="UniProtKB-KW"/>
</dbReference>
<dbReference type="FunFam" id="1.20.58.220:FF:000001">
    <property type="entry name" value="Phosphate-specific transport system accessory protein PhoU"/>
    <property type="match status" value="1"/>
</dbReference>
<dbReference type="FunFam" id="1.20.58.220:FF:000002">
    <property type="entry name" value="Phosphate-specific transport system accessory protein PhoU"/>
    <property type="match status" value="1"/>
</dbReference>
<dbReference type="Gene3D" id="1.20.58.220">
    <property type="entry name" value="Phosphate transport system protein phou homolog 2, domain 2"/>
    <property type="match status" value="2"/>
</dbReference>
<dbReference type="InterPro" id="IPR028366">
    <property type="entry name" value="P_transport_PhoU"/>
</dbReference>
<dbReference type="InterPro" id="IPR038078">
    <property type="entry name" value="PhoU-like_sf"/>
</dbReference>
<dbReference type="InterPro" id="IPR026022">
    <property type="entry name" value="PhoU_dom"/>
</dbReference>
<dbReference type="NCBIfam" id="TIGR02135">
    <property type="entry name" value="phoU_full"/>
    <property type="match status" value="1"/>
</dbReference>
<dbReference type="PANTHER" id="PTHR42930">
    <property type="entry name" value="PHOSPHATE-SPECIFIC TRANSPORT SYSTEM ACCESSORY PROTEIN PHOU"/>
    <property type="match status" value="1"/>
</dbReference>
<dbReference type="PANTHER" id="PTHR42930:SF3">
    <property type="entry name" value="PHOSPHATE-SPECIFIC TRANSPORT SYSTEM ACCESSORY PROTEIN PHOU"/>
    <property type="match status" value="1"/>
</dbReference>
<dbReference type="Pfam" id="PF01895">
    <property type="entry name" value="PhoU"/>
    <property type="match status" value="2"/>
</dbReference>
<dbReference type="PIRSF" id="PIRSF003107">
    <property type="entry name" value="PhoU"/>
    <property type="match status" value="1"/>
</dbReference>
<dbReference type="SUPFAM" id="SSF109755">
    <property type="entry name" value="PhoU-like"/>
    <property type="match status" value="1"/>
</dbReference>
<keyword id="KW-0002">3D-structure</keyword>
<keyword id="KW-0963">Cytoplasm</keyword>
<keyword id="KW-0592">Phosphate transport</keyword>
<keyword id="KW-1185">Reference proteome</keyword>
<keyword id="KW-0813">Transport</keyword>
<gene>
    <name type="primary">phoU</name>
    <name type="ordered locus">aq_906</name>
</gene>
<organism>
    <name type="scientific">Aquifex aeolicus (strain VF5)</name>
    <dbReference type="NCBI Taxonomy" id="224324"/>
    <lineage>
        <taxon>Bacteria</taxon>
        <taxon>Pseudomonadati</taxon>
        <taxon>Aquificota</taxon>
        <taxon>Aquificia</taxon>
        <taxon>Aquificales</taxon>
        <taxon>Aquificaceae</taxon>
        <taxon>Aquifex</taxon>
    </lineage>
</organism>
<accession>O67053</accession>
<proteinExistence type="evidence at protein level"/>
<sequence length="221" mass="25567">MKLFKELEETKEQVIKMAKLVQEAIDKATEALNKQNVELAEEVIKGDDTIDLLEVDIERRCIRMIALYQPEAGDLRMIMGIYKIVSDLERMGDEAENIAERAILLAEEPPLKPYVNINFMSEIVKEMVNDSVISFIQQDTLLAKKVIEKDDTVDELYHQLERELMTYVLEDPRNIKRAMHLSFVARHYERIADHAENVAEAAIYLSEGEIVKHQHIKEKGE</sequence>
<reference key="1">
    <citation type="journal article" date="1998" name="Nature">
        <title>The complete genome of the hyperthermophilic bacterium Aquifex aeolicus.</title>
        <authorList>
            <person name="Deckert G."/>
            <person name="Warren P.V."/>
            <person name="Gaasterland T."/>
            <person name="Young W.G."/>
            <person name="Lenox A.L."/>
            <person name="Graham D.E."/>
            <person name="Overbeek R."/>
            <person name="Snead M.A."/>
            <person name="Keller M."/>
            <person name="Aujay M."/>
            <person name="Huber R."/>
            <person name="Feldman R.A."/>
            <person name="Short J.M."/>
            <person name="Olsen G.J."/>
            <person name="Swanson R.V."/>
        </authorList>
    </citation>
    <scope>NUCLEOTIDE SEQUENCE [LARGE SCALE GENOMIC DNA]</scope>
    <source>
        <strain>VF5</strain>
    </source>
</reference>
<reference key="2">
    <citation type="journal article" date="2005" name="J. Bacteriol.">
        <title>Crystal structure of the 'PhoU-like' phosphate uptake regulator from Aquifex aeolicus.</title>
        <authorList>
            <person name="Oganesyan V."/>
            <person name="Oganesyan N."/>
            <person name="Adams P.D."/>
            <person name="Jancarik J."/>
            <person name="Yokota H.A."/>
            <person name="Kim R."/>
            <person name="Kim S.H."/>
        </authorList>
    </citation>
    <scope>X-RAY CRYSTALLOGRAPHY (2.90 ANGSTROMS)</scope>
    <scope>IDENTIFICATION BY MASS SPECTROMETRY</scope>
    <scope>SUGGESTION OF FUNCTION AS CHAPERONE</scope>
    <scope>SUBCELLULAR LOCATION</scope>
    <scope>SUBUNIT</scope>
</reference>
<name>PHOU_AQUAE</name>
<feature type="chain" id="PRO_0000155163" description="Phosphate-specific transport system accessory protein PhoU homolog">
    <location>
        <begin position="1"/>
        <end position="221"/>
    </location>
</feature>
<feature type="helix" evidence="3">
    <location>
        <begin position="1"/>
        <end position="33"/>
    </location>
</feature>
<feature type="helix" evidence="3">
    <location>
        <begin position="37"/>
        <end position="45"/>
    </location>
</feature>
<feature type="helix" evidence="3">
    <location>
        <begin position="47"/>
        <end position="68"/>
    </location>
</feature>
<feature type="helix" evidence="3">
    <location>
        <begin position="72"/>
        <end position="106"/>
    </location>
</feature>
<feature type="helix" evidence="3">
    <location>
        <begin position="115"/>
        <end position="136"/>
    </location>
</feature>
<feature type="helix" evidence="3">
    <location>
        <begin position="140"/>
        <end position="170"/>
    </location>
</feature>
<feature type="helix" evidence="3">
    <location>
        <begin position="172"/>
        <end position="174"/>
    </location>
</feature>
<feature type="helix" evidence="3">
    <location>
        <begin position="175"/>
        <end position="208"/>
    </location>
</feature>